<organism>
    <name type="scientific">Rhodococcus erythropolis</name>
    <name type="common">Arthrobacter picolinophilus</name>
    <dbReference type="NCBI Taxonomy" id="1833"/>
    <lineage>
        <taxon>Bacteria</taxon>
        <taxon>Bacillati</taxon>
        <taxon>Actinomycetota</taxon>
        <taxon>Actinomycetes</taxon>
        <taxon>Mycobacteriales</taxon>
        <taxon>Nocardiaceae</taxon>
        <taxon>Rhodococcus</taxon>
        <taxon>Rhodococcus erythropolis group</taxon>
    </lineage>
</organism>
<protein>
    <recommendedName>
        <fullName>Precorrin-4 C(11)-methyltransferase</fullName>
        <ecNumber>2.1.1.133</ecNumber>
    </recommendedName>
    <alternativeName>
        <fullName>Precorrin-3 methylase</fullName>
    </alternativeName>
</protein>
<accession>Q53138</accession>
<dbReference type="EC" id="2.1.1.133"/>
<dbReference type="EMBL" id="L21196">
    <property type="protein sequence ID" value="AAC37130.1"/>
    <property type="molecule type" value="Genomic_DNA"/>
</dbReference>
<dbReference type="PIR" id="T46836">
    <property type="entry name" value="T46836"/>
</dbReference>
<dbReference type="RefSeq" id="WP_222671504.1">
    <property type="nucleotide sequence ID" value="NZ_JABBPH010000001.1"/>
</dbReference>
<dbReference type="SMR" id="Q53138"/>
<dbReference type="STRING" id="1833.XU06_14725"/>
<dbReference type="UniPathway" id="UPA00148">
    <property type="reaction ID" value="UER00215"/>
</dbReference>
<dbReference type="GO" id="GO:0046026">
    <property type="term" value="F:precorrin-4 C11-methyltransferase activity"/>
    <property type="evidence" value="ECO:0007669"/>
    <property type="project" value="UniProtKB-EC"/>
</dbReference>
<dbReference type="GO" id="GO:0009236">
    <property type="term" value="P:cobalamin biosynthetic process"/>
    <property type="evidence" value="ECO:0007669"/>
    <property type="project" value="UniProtKB-UniPathway"/>
</dbReference>
<dbReference type="GO" id="GO:0032259">
    <property type="term" value="P:methylation"/>
    <property type="evidence" value="ECO:0007669"/>
    <property type="project" value="UniProtKB-KW"/>
</dbReference>
<dbReference type="CDD" id="cd11641">
    <property type="entry name" value="Precorrin-4_C11-MT"/>
    <property type="match status" value="1"/>
</dbReference>
<dbReference type="Gene3D" id="3.40.1010.10">
    <property type="entry name" value="Cobalt-precorrin-4 Transmethylase, Domain 1"/>
    <property type="match status" value="1"/>
</dbReference>
<dbReference type="Gene3D" id="3.30.950.10">
    <property type="entry name" value="Methyltransferase, Cobalt-precorrin-4 Transmethylase, Domain 2"/>
    <property type="match status" value="1"/>
</dbReference>
<dbReference type="InterPro" id="IPR000878">
    <property type="entry name" value="4pyrrol_Mease"/>
</dbReference>
<dbReference type="InterPro" id="IPR035996">
    <property type="entry name" value="4pyrrol_Methylase_sf"/>
</dbReference>
<dbReference type="InterPro" id="IPR014777">
    <property type="entry name" value="4pyrrole_Mease_sub1"/>
</dbReference>
<dbReference type="InterPro" id="IPR014776">
    <property type="entry name" value="4pyrrole_Mease_sub2"/>
</dbReference>
<dbReference type="InterPro" id="IPR006362">
    <property type="entry name" value="Cbl_synth_CobM/CibF"/>
</dbReference>
<dbReference type="InterPro" id="IPR050161">
    <property type="entry name" value="Siro_Cobalamin_biosynth"/>
</dbReference>
<dbReference type="InterPro" id="IPR003043">
    <property type="entry name" value="Uropor_MeTrfase_CS"/>
</dbReference>
<dbReference type="NCBIfam" id="TIGR01465">
    <property type="entry name" value="cobM_cbiF"/>
    <property type="match status" value="1"/>
</dbReference>
<dbReference type="PANTHER" id="PTHR45790:SF4">
    <property type="entry name" value="COBALT-PRECORRIN-4 C(11)-METHYLTRANSFERASE"/>
    <property type="match status" value="1"/>
</dbReference>
<dbReference type="PANTHER" id="PTHR45790">
    <property type="entry name" value="SIROHEME SYNTHASE-RELATED"/>
    <property type="match status" value="1"/>
</dbReference>
<dbReference type="Pfam" id="PF00590">
    <property type="entry name" value="TP_methylase"/>
    <property type="match status" value="1"/>
</dbReference>
<dbReference type="SUPFAM" id="SSF53790">
    <property type="entry name" value="Tetrapyrrole methylase"/>
    <property type="match status" value="1"/>
</dbReference>
<dbReference type="PROSITE" id="PS00839">
    <property type="entry name" value="SUMT_1"/>
    <property type="match status" value="1"/>
</dbReference>
<dbReference type="PROSITE" id="PS00840">
    <property type="entry name" value="SUMT_2"/>
    <property type="match status" value="1"/>
</dbReference>
<evidence type="ECO:0000305" key="1"/>
<name>COBM_RHOER</name>
<sequence length="249" mass="25963">MTVYFIGAGPGAADLITVRAQRIIAASPVCLYAGSLVPQELLAECPEGARVIDTARLSLDEIVALLIEADAAGQDVARLHSGDPSIFSAVAEQVRRLESAGVAYQVVPGVPAFTAAAASLGRELTVPGVSQSIVLTRVSTLSTAMPEGEDLRSLGRSGATMVVHLGAHRIDQIAEELIEDYGRDCPAAVVAFASRPDEIVLRGTLATIADQVKAAGVTKTAVVIVGRVLAAEGFPDSYLYSATRERTTH</sequence>
<keyword id="KW-0169">Cobalamin biosynthesis</keyword>
<keyword id="KW-0489">Methyltransferase</keyword>
<keyword id="KW-0949">S-adenosyl-L-methionine</keyword>
<keyword id="KW-0808">Transferase</keyword>
<gene>
    <name type="primary">cobM</name>
</gene>
<feature type="chain" id="PRO_0000150398" description="Precorrin-4 C(11)-methyltransferase">
    <location>
        <begin position="1"/>
        <end position="249"/>
    </location>
</feature>
<reference key="1">
    <citation type="journal article" date="1994" name="Gene">
        <title>Sequences of the cobalamin biosynthetic genes cobK, cobL and cobM from Rhodococcus sp. NI86/21.</title>
        <authorList>
            <person name="de Mot R."/>
            <person name="Nagy I."/>
            <person name="Schoofs G."/>
            <person name="Vanderleyden J."/>
        </authorList>
    </citation>
    <scope>NUCLEOTIDE SEQUENCE [GENOMIC DNA]</scope>
    <source>
        <strain>NI86/21</strain>
    </source>
</reference>
<comment type="function">
    <text>Catalyzes the methylation of C-11 in precorrin-4 to form precorrin-5.</text>
</comment>
<comment type="catalytic activity">
    <reaction>
        <text>precorrin-4 + S-adenosyl-L-methionine = precorrin-5 + S-adenosyl-L-homocysteine</text>
        <dbReference type="Rhea" id="RHEA:22012"/>
        <dbReference type="ChEBI" id="CHEBI:57769"/>
        <dbReference type="ChEBI" id="CHEBI:57856"/>
        <dbReference type="ChEBI" id="CHEBI:59789"/>
        <dbReference type="ChEBI" id="CHEBI:77871"/>
        <dbReference type="EC" id="2.1.1.133"/>
    </reaction>
</comment>
<comment type="pathway">
    <text>Cofactor biosynthesis; adenosylcobalamin biosynthesis; cob(II)yrinate a,c-diamide from precorrin-2 (aerobic route): step 4/10.</text>
</comment>
<comment type="similarity">
    <text evidence="1">Belongs to the precorrin methyltransferase family.</text>
</comment>
<proteinExistence type="inferred from homology"/>